<reference key="1">
    <citation type="journal article" date="2009" name="J. Bacteriol.">
        <title>Complete and draft genome sequences of six members of the Aquificales.</title>
        <authorList>
            <person name="Reysenbach A.-L."/>
            <person name="Hamamura N."/>
            <person name="Podar M."/>
            <person name="Griffiths E."/>
            <person name="Ferreira S."/>
            <person name="Hochstein R."/>
            <person name="Heidelberg J."/>
            <person name="Johnson J."/>
            <person name="Mead D."/>
            <person name="Pohorille A."/>
            <person name="Sarmiento M."/>
            <person name="Schweighofer K."/>
            <person name="Seshadri R."/>
            <person name="Voytek M.A."/>
        </authorList>
    </citation>
    <scope>NUCLEOTIDE SEQUENCE [LARGE SCALE GENOMIC DNA]</scope>
    <source>
        <strain>YO3AOP1</strain>
    </source>
</reference>
<feature type="chain" id="PRO_1000192118" description="UDP-N-acetylmuramate--L-alanine ligase">
    <location>
        <begin position="1"/>
        <end position="454"/>
    </location>
</feature>
<feature type="binding site" evidence="1">
    <location>
        <begin position="113"/>
        <end position="119"/>
    </location>
    <ligand>
        <name>ATP</name>
        <dbReference type="ChEBI" id="CHEBI:30616"/>
    </ligand>
</feature>
<protein>
    <recommendedName>
        <fullName evidence="1">UDP-N-acetylmuramate--L-alanine ligase</fullName>
        <ecNumber evidence="1">6.3.2.8</ecNumber>
    </recommendedName>
    <alternativeName>
        <fullName evidence="1">UDP-N-acetylmuramoyl-L-alanine synthetase</fullName>
    </alternativeName>
</protein>
<evidence type="ECO:0000255" key="1">
    <source>
        <dbReference type="HAMAP-Rule" id="MF_00046"/>
    </source>
</evidence>
<name>MURC_SULSY</name>
<comment type="function">
    <text evidence="1">Cell wall formation.</text>
</comment>
<comment type="catalytic activity">
    <reaction evidence="1">
        <text>UDP-N-acetyl-alpha-D-muramate + L-alanine + ATP = UDP-N-acetyl-alpha-D-muramoyl-L-alanine + ADP + phosphate + H(+)</text>
        <dbReference type="Rhea" id="RHEA:23372"/>
        <dbReference type="ChEBI" id="CHEBI:15378"/>
        <dbReference type="ChEBI" id="CHEBI:30616"/>
        <dbReference type="ChEBI" id="CHEBI:43474"/>
        <dbReference type="ChEBI" id="CHEBI:57972"/>
        <dbReference type="ChEBI" id="CHEBI:70757"/>
        <dbReference type="ChEBI" id="CHEBI:83898"/>
        <dbReference type="ChEBI" id="CHEBI:456216"/>
        <dbReference type="EC" id="6.3.2.8"/>
    </reaction>
</comment>
<comment type="pathway">
    <text evidence="1">Cell wall biogenesis; peptidoglycan biosynthesis.</text>
</comment>
<comment type="subcellular location">
    <subcellularLocation>
        <location evidence="1">Cytoplasm</location>
    </subcellularLocation>
</comment>
<comment type="similarity">
    <text evidence="1">Belongs to the MurCDEF family.</text>
</comment>
<organism>
    <name type="scientific">Sulfurihydrogenibium sp. (strain YO3AOP1)</name>
    <dbReference type="NCBI Taxonomy" id="436114"/>
    <lineage>
        <taxon>Bacteria</taxon>
        <taxon>Pseudomonadati</taxon>
        <taxon>Aquificota</taxon>
        <taxon>Aquificia</taxon>
        <taxon>Aquificales</taxon>
        <taxon>Hydrogenothermaceae</taxon>
        <taxon>Sulfurihydrogenibium</taxon>
    </lineage>
</organism>
<keyword id="KW-0067">ATP-binding</keyword>
<keyword id="KW-0131">Cell cycle</keyword>
<keyword id="KW-0132">Cell division</keyword>
<keyword id="KW-0133">Cell shape</keyword>
<keyword id="KW-0961">Cell wall biogenesis/degradation</keyword>
<keyword id="KW-0963">Cytoplasm</keyword>
<keyword id="KW-0436">Ligase</keyword>
<keyword id="KW-0547">Nucleotide-binding</keyword>
<keyword id="KW-0573">Peptidoglycan synthesis</keyword>
<gene>
    <name evidence="1" type="primary">murC</name>
    <name type="ordered locus">SYO3AOP1_1214</name>
</gene>
<dbReference type="EC" id="6.3.2.8" evidence="1"/>
<dbReference type="EMBL" id="CP001080">
    <property type="protein sequence ID" value="ACD66825.1"/>
    <property type="molecule type" value="Genomic_DNA"/>
</dbReference>
<dbReference type="RefSeq" id="WP_012459889.1">
    <property type="nucleotide sequence ID" value="NC_010730.1"/>
</dbReference>
<dbReference type="SMR" id="B2VA52"/>
<dbReference type="STRING" id="436114.SYO3AOP1_1214"/>
<dbReference type="KEGG" id="sul:SYO3AOP1_1214"/>
<dbReference type="eggNOG" id="COG0773">
    <property type="taxonomic scope" value="Bacteria"/>
</dbReference>
<dbReference type="HOGENOM" id="CLU_028104_2_2_0"/>
<dbReference type="UniPathway" id="UPA00219"/>
<dbReference type="GO" id="GO:0005737">
    <property type="term" value="C:cytoplasm"/>
    <property type="evidence" value="ECO:0007669"/>
    <property type="project" value="UniProtKB-SubCell"/>
</dbReference>
<dbReference type="GO" id="GO:0005524">
    <property type="term" value="F:ATP binding"/>
    <property type="evidence" value="ECO:0007669"/>
    <property type="project" value="UniProtKB-UniRule"/>
</dbReference>
<dbReference type="GO" id="GO:0008763">
    <property type="term" value="F:UDP-N-acetylmuramate-L-alanine ligase activity"/>
    <property type="evidence" value="ECO:0007669"/>
    <property type="project" value="UniProtKB-UniRule"/>
</dbReference>
<dbReference type="GO" id="GO:0051301">
    <property type="term" value="P:cell division"/>
    <property type="evidence" value="ECO:0007669"/>
    <property type="project" value="UniProtKB-KW"/>
</dbReference>
<dbReference type="GO" id="GO:0071555">
    <property type="term" value="P:cell wall organization"/>
    <property type="evidence" value="ECO:0007669"/>
    <property type="project" value="UniProtKB-KW"/>
</dbReference>
<dbReference type="GO" id="GO:0009252">
    <property type="term" value="P:peptidoglycan biosynthetic process"/>
    <property type="evidence" value="ECO:0007669"/>
    <property type="project" value="UniProtKB-UniRule"/>
</dbReference>
<dbReference type="GO" id="GO:0008360">
    <property type="term" value="P:regulation of cell shape"/>
    <property type="evidence" value="ECO:0007669"/>
    <property type="project" value="UniProtKB-KW"/>
</dbReference>
<dbReference type="Gene3D" id="3.90.190.20">
    <property type="entry name" value="Mur ligase, C-terminal domain"/>
    <property type="match status" value="1"/>
</dbReference>
<dbReference type="Gene3D" id="3.40.1190.10">
    <property type="entry name" value="Mur-like, catalytic domain"/>
    <property type="match status" value="1"/>
</dbReference>
<dbReference type="Gene3D" id="3.40.50.720">
    <property type="entry name" value="NAD(P)-binding Rossmann-like Domain"/>
    <property type="match status" value="1"/>
</dbReference>
<dbReference type="HAMAP" id="MF_00046">
    <property type="entry name" value="MurC"/>
    <property type="match status" value="1"/>
</dbReference>
<dbReference type="InterPro" id="IPR036565">
    <property type="entry name" value="Mur-like_cat_sf"/>
</dbReference>
<dbReference type="InterPro" id="IPR004101">
    <property type="entry name" value="Mur_ligase_C"/>
</dbReference>
<dbReference type="InterPro" id="IPR036615">
    <property type="entry name" value="Mur_ligase_C_dom_sf"/>
</dbReference>
<dbReference type="InterPro" id="IPR013221">
    <property type="entry name" value="Mur_ligase_cen"/>
</dbReference>
<dbReference type="InterPro" id="IPR000713">
    <property type="entry name" value="Mur_ligase_N"/>
</dbReference>
<dbReference type="InterPro" id="IPR050061">
    <property type="entry name" value="MurCDEF_pg_biosynth"/>
</dbReference>
<dbReference type="InterPro" id="IPR005758">
    <property type="entry name" value="UDP-N-AcMur_Ala_ligase_MurC"/>
</dbReference>
<dbReference type="NCBIfam" id="TIGR01082">
    <property type="entry name" value="murC"/>
    <property type="match status" value="1"/>
</dbReference>
<dbReference type="PANTHER" id="PTHR43445:SF3">
    <property type="entry name" value="UDP-N-ACETYLMURAMATE--L-ALANINE LIGASE"/>
    <property type="match status" value="1"/>
</dbReference>
<dbReference type="PANTHER" id="PTHR43445">
    <property type="entry name" value="UDP-N-ACETYLMURAMATE--L-ALANINE LIGASE-RELATED"/>
    <property type="match status" value="1"/>
</dbReference>
<dbReference type="Pfam" id="PF01225">
    <property type="entry name" value="Mur_ligase"/>
    <property type="match status" value="1"/>
</dbReference>
<dbReference type="Pfam" id="PF02875">
    <property type="entry name" value="Mur_ligase_C"/>
    <property type="match status" value="1"/>
</dbReference>
<dbReference type="Pfam" id="PF08245">
    <property type="entry name" value="Mur_ligase_M"/>
    <property type="match status" value="1"/>
</dbReference>
<dbReference type="SUPFAM" id="SSF51984">
    <property type="entry name" value="MurCD N-terminal domain"/>
    <property type="match status" value="1"/>
</dbReference>
<dbReference type="SUPFAM" id="SSF53623">
    <property type="entry name" value="MurD-like peptide ligases, catalytic domain"/>
    <property type="match status" value="1"/>
</dbReference>
<dbReference type="SUPFAM" id="SSF53244">
    <property type="entry name" value="MurD-like peptide ligases, peptide-binding domain"/>
    <property type="match status" value="1"/>
</dbReference>
<sequence>MFRGKVRKIHFIGIGGSGMNGIAELLLNQGYTITGSDLKESPTIERLRNLGAKIFIGHSEENVKDADVVVYSSAVKPDNPEMIKAKQLGIPTIPRGEMLAELMRFKYGIAIAGSHGKTTTTSMVGTVLGKTGFDPTVVIGGKLEAYGSNAKLGRGEFLVTESDESDGSFLKLTPTIVSINNIDLEHIGFYKDLEDIKKAFVAFANKVPFYGAAAVNIDDENVKSILPYIERKVIKFGFSEDADIRAYDVRLENGRYKFKVNDFGEIHLSVPGIHNVYNALATIAICNELSVPFCVIKESLENFKNAKRRFEIKYSNDIIVIDDYAHHPTELKATLSAARDYFKDRRIIAVFQPHRYSRLNALFEEFAKAFDIPDITIVTEVYSAGESPIENVSGEKLAEKIREYGNNVYYVSNLEEAENLLKNIIQKGDVILTLGAGSITQLSDTLAKYLSEKE</sequence>
<accession>B2VA52</accession>
<proteinExistence type="inferred from homology"/>